<comment type="function">
    <text evidence="1">This protein is located at the 30S-50S ribosomal subunit interface and may play a role in the structure and function of the aminoacyl-tRNA binding site.</text>
</comment>
<comment type="similarity">
    <text evidence="1">Belongs to the bacterial ribosomal protein bL19 family.</text>
</comment>
<name>RL19_FRATH</name>
<proteinExistence type="inferred from homology"/>
<gene>
    <name evidence="1" type="primary">rplS</name>
    <name type="ordered locus">FTL_1735</name>
</gene>
<evidence type="ECO:0000255" key="1">
    <source>
        <dbReference type="HAMAP-Rule" id="MF_00402"/>
    </source>
</evidence>
<evidence type="ECO:0000305" key="2"/>
<reference key="1">
    <citation type="submission" date="2006-03" db="EMBL/GenBank/DDBJ databases">
        <title>Complete genome sequence of Francisella tularensis LVS (Live Vaccine Strain).</title>
        <authorList>
            <person name="Chain P."/>
            <person name="Larimer F."/>
            <person name="Land M."/>
            <person name="Stilwagen S."/>
            <person name="Larsson P."/>
            <person name="Bearden S."/>
            <person name="Chu M."/>
            <person name="Oyston P."/>
            <person name="Forsman M."/>
            <person name="Andersson S."/>
            <person name="Lindler L."/>
            <person name="Titball R."/>
            <person name="Garcia E."/>
        </authorList>
    </citation>
    <scope>NUCLEOTIDE SEQUENCE [LARGE SCALE GENOMIC DNA]</scope>
    <source>
        <strain>LVS</strain>
    </source>
</reference>
<keyword id="KW-1185">Reference proteome</keyword>
<keyword id="KW-0687">Ribonucleoprotein</keyword>
<keyword id="KW-0689">Ribosomal protein</keyword>
<dbReference type="EMBL" id="AM233362">
    <property type="protein sequence ID" value="CAJ80174.1"/>
    <property type="molecule type" value="Genomic_DNA"/>
</dbReference>
<dbReference type="RefSeq" id="WP_003017210.1">
    <property type="nucleotide sequence ID" value="NZ_CP009694.1"/>
</dbReference>
<dbReference type="SMR" id="Q2A1N6"/>
<dbReference type="KEGG" id="ftl:FTL_1735"/>
<dbReference type="Proteomes" id="UP000001944">
    <property type="component" value="Chromosome"/>
</dbReference>
<dbReference type="GO" id="GO:0022625">
    <property type="term" value="C:cytosolic large ribosomal subunit"/>
    <property type="evidence" value="ECO:0007669"/>
    <property type="project" value="TreeGrafter"/>
</dbReference>
<dbReference type="GO" id="GO:0003735">
    <property type="term" value="F:structural constituent of ribosome"/>
    <property type="evidence" value="ECO:0007669"/>
    <property type="project" value="InterPro"/>
</dbReference>
<dbReference type="GO" id="GO:0006412">
    <property type="term" value="P:translation"/>
    <property type="evidence" value="ECO:0007669"/>
    <property type="project" value="UniProtKB-UniRule"/>
</dbReference>
<dbReference type="FunFam" id="2.30.30.790:FF:000001">
    <property type="entry name" value="50S ribosomal protein L19"/>
    <property type="match status" value="1"/>
</dbReference>
<dbReference type="Gene3D" id="2.30.30.790">
    <property type="match status" value="1"/>
</dbReference>
<dbReference type="HAMAP" id="MF_00402">
    <property type="entry name" value="Ribosomal_bL19"/>
    <property type="match status" value="1"/>
</dbReference>
<dbReference type="InterPro" id="IPR001857">
    <property type="entry name" value="Ribosomal_bL19"/>
</dbReference>
<dbReference type="InterPro" id="IPR018257">
    <property type="entry name" value="Ribosomal_bL19_CS"/>
</dbReference>
<dbReference type="InterPro" id="IPR038657">
    <property type="entry name" value="Ribosomal_bL19_sf"/>
</dbReference>
<dbReference type="InterPro" id="IPR008991">
    <property type="entry name" value="Translation_prot_SH3-like_sf"/>
</dbReference>
<dbReference type="NCBIfam" id="TIGR01024">
    <property type="entry name" value="rplS_bact"/>
    <property type="match status" value="1"/>
</dbReference>
<dbReference type="PANTHER" id="PTHR15680:SF9">
    <property type="entry name" value="LARGE RIBOSOMAL SUBUNIT PROTEIN BL19M"/>
    <property type="match status" value="1"/>
</dbReference>
<dbReference type="PANTHER" id="PTHR15680">
    <property type="entry name" value="RIBOSOMAL PROTEIN L19"/>
    <property type="match status" value="1"/>
</dbReference>
<dbReference type="Pfam" id="PF01245">
    <property type="entry name" value="Ribosomal_L19"/>
    <property type="match status" value="1"/>
</dbReference>
<dbReference type="PIRSF" id="PIRSF002191">
    <property type="entry name" value="Ribosomal_L19"/>
    <property type="match status" value="1"/>
</dbReference>
<dbReference type="PRINTS" id="PR00061">
    <property type="entry name" value="RIBOSOMALL19"/>
</dbReference>
<dbReference type="SUPFAM" id="SSF50104">
    <property type="entry name" value="Translation proteins SH3-like domain"/>
    <property type="match status" value="1"/>
</dbReference>
<dbReference type="PROSITE" id="PS01015">
    <property type="entry name" value="RIBOSOMAL_L19"/>
    <property type="match status" value="1"/>
</dbReference>
<sequence length="115" mass="13308">MKNKFVELVEKSQLRNDLPEFNPGDSITVNLWIKEGDKQRIQAFKGFVLRKRNRGLHSAFTVRKMSSGMGVERTFQTHSPLIDSIIVEKRADVRRAKLYYMRGLTGKAARIKEKV</sequence>
<protein>
    <recommendedName>
        <fullName evidence="1">Large ribosomal subunit protein bL19</fullName>
    </recommendedName>
    <alternativeName>
        <fullName evidence="2">50S ribosomal protein L19</fullName>
    </alternativeName>
</protein>
<feature type="chain" id="PRO_0000252509" description="Large ribosomal subunit protein bL19">
    <location>
        <begin position="1"/>
        <end position="115"/>
    </location>
</feature>
<accession>Q2A1N6</accession>
<organism>
    <name type="scientific">Francisella tularensis subsp. holarctica (strain LVS)</name>
    <dbReference type="NCBI Taxonomy" id="376619"/>
    <lineage>
        <taxon>Bacteria</taxon>
        <taxon>Pseudomonadati</taxon>
        <taxon>Pseudomonadota</taxon>
        <taxon>Gammaproteobacteria</taxon>
        <taxon>Thiotrichales</taxon>
        <taxon>Francisellaceae</taxon>
        <taxon>Francisella</taxon>
    </lineage>
</organism>